<reference key="1">
    <citation type="submission" date="2008-01" db="EMBL/GenBank/DDBJ databases">
        <title>Complete sequence of Shewanella halifaxensis HAW-EB4.</title>
        <authorList>
            <consortium name="US DOE Joint Genome Institute"/>
            <person name="Copeland A."/>
            <person name="Lucas S."/>
            <person name="Lapidus A."/>
            <person name="Glavina del Rio T."/>
            <person name="Dalin E."/>
            <person name="Tice H."/>
            <person name="Bruce D."/>
            <person name="Goodwin L."/>
            <person name="Pitluck S."/>
            <person name="Sims D."/>
            <person name="Brettin T."/>
            <person name="Detter J.C."/>
            <person name="Han C."/>
            <person name="Kuske C.R."/>
            <person name="Schmutz J."/>
            <person name="Larimer F."/>
            <person name="Land M."/>
            <person name="Hauser L."/>
            <person name="Kyrpides N."/>
            <person name="Kim E."/>
            <person name="Zhao J.-S."/>
            <person name="Richardson P."/>
        </authorList>
    </citation>
    <scope>NUCLEOTIDE SEQUENCE [LARGE SCALE GENOMIC DNA]</scope>
    <source>
        <strain>HAW-EB4</strain>
    </source>
</reference>
<keyword id="KW-0067">ATP-binding</keyword>
<keyword id="KW-0963">Cytoplasm</keyword>
<keyword id="KW-0227">DNA damage</keyword>
<keyword id="KW-0233">DNA recombination</keyword>
<keyword id="KW-0234">DNA repair</keyword>
<keyword id="KW-0238">DNA-binding</keyword>
<keyword id="KW-0547">Nucleotide-binding</keyword>
<keyword id="KW-0742">SOS response</keyword>
<proteinExistence type="inferred from homology"/>
<comment type="function">
    <text evidence="1">Can catalyze the hydrolysis of ATP in the presence of single-stranded DNA, the ATP-dependent uptake of single-stranded DNA by duplex DNA, and the ATP-dependent hybridization of homologous single-stranded DNAs. It interacts with LexA causing its activation and leading to its autocatalytic cleavage.</text>
</comment>
<comment type="subcellular location">
    <subcellularLocation>
        <location evidence="1">Cytoplasm</location>
    </subcellularLocation>
</comment>
<comment type="similarity">
    <text evidence="1">Belongs to the RecA family.</text>
</comment>
<gene>
    <name evidence="1" type="primary">recA</name>
    <name type="ordered locus">Shal_1232</name>
</gene>
<evidence type="ECO:0000255" key="1">
    <source>
        <dbReference type="HAMAP-Rule" id="MF_00268"/>
    </source>
</evidence>
<protein>
    <recommendedName>
        <fullName evidence="1">Protein RecA</fullName>
    </recommendedName>
    <alternativeName>
        <fullName evidence="1">Recombinase A</fullName>
    </alternativeName>
</protein>
<organism>
    <name type="scientific">Shewanella halifaxensis (strain HAW-EB4)</name>
    <dbReference type="NCBI Taxonomy" id="458817"/>
    <lineage>
        <taxon>Bacteria</taxon>
        <taxon>Pseudomonadati</taxon>
        <taxon>Pseudomonadota</taxon>
        <taxon>Gammaproteobacteria</taxon>
        <taxon>Alteromonadales</taxon>
        <taxon>Shewanellaceae</taxon>
        <taxon>Shewanella</taxon>
    </lineage>
</organism>
<feature type="chain" id="PRO_1000078681" description="Protein RecA">
    <location>
        <begin position="1"/>
        <end position="355"/>
    </location>
</feature>
<feature type="binding site" evidence="1">
    <location>
        <begin position="67"/>
        <end position="74"/>
    </location>
    <ligand>
        <name>ATP</name>
        <dbReference type="ChEBI" id="CHEBI:30616"/>
    </ligand>
</feature>
<name>RECA_SHEHH</name>
<accession>B0TK14</accession>
<dbReference type="EMBL" id="CP000931">
    <property type="protein sequence ID" value="ABZ75801.1"/>
    <property type="molecule type" value="Genomic_DNA"/>
</dbReference>
<dbReference type="RefSeq" id="WP_012276343.1">
    <property type="nucleotide sequence ID" value="NC_010334.1"/>
</dbReference>
<dbReference type="SMR" id="B0TK14"/>
<dbReference type="STRING" id="458817.Shal_1232"/>
<dbReference type="KEGG" id="shl:Shal_1232"/>
<dbReference type="eggNOG" id="COG0468">
    <property type="taxonomic scope" value="Bacteria"/>
</dbReference>
<dbReference type="HOGENOM" id="CLU_040469_3_2_6"/>
<dbReference type="OrthoDB" id="9776733at2"/>
<dbReference type="Proteomes" id="UP000001317">
    <property type="component" value="Chromosome"/>
</dbReference>
<dbReference type="GO" id="GO:0005829">
    <property type="term" value="C:cytosol"/>
    <property type="evidence" value="ECO:0007669"/>
    <property type="project" value="TreeGrafter"/>
</dbReference>
<dbReference type="GO" id="GO:0005524">
    <property type="term" value="F:ATP binding"/>
    <property type="evidence" value="ECO:0007669"/>
    <property type="project" value="UniProtKB-UniRule"/>
</dbReference>
<dbReference type="GO" id="GO:0016887">
    <property type="term" value="F:ATP hydrolysis activity"/>
    <property type="evidence" value="ECO:0007669"/>
    <property type="project" value="InterPro"/>
</dbReference>
<dbReference type="GO" id="GO:0140664">
    <property type="term" value="F:ATP-dependent DNA damage sensor activity"/>
    <property type="evidence" value="ECO:0007669"/>
    <property type="project" value="InterPro"/>
</dbReference>
<dbReference type="GO" id="GO:0003684">
    <property type="term" value="F:damaged DNA binding"/>
    <property type="evidence" value="ECO:0007669"/>
    <property type="project" value="UniProtKB-UniRule"/>
</dbReference>
<dbReference type="GO" id="GO:0003697">
    <property type="term" value="F:single-stranded DNA binding"/>
    <property type="evidence" value="ECO:0007669"/>
    <property type="project" value="UniProtKB-UniRule"/>
</dbReference>
<dbReference type="GO" id="GO:0006310">
    <property type="term" value="P:DNA recombination"/>
    <property type="evidence" value="ECO:0007669"/>
    <property type="project" value="UniProtKB-UniRule"/>
</dbReference>
<dbReference type="GO" id="GO:0006281">
    <property type="term" value="P:DNA repair"/>
    <property type="evidence" value="ECO:0007669"/>
    <property type="project" value="UniProtKB-UniRule"/>
</dbReference>
<dbReference type="GO" id="GO:0009432">
    <property type="term" value="P:SOS response"/>
    <property type="evidence" value="ECO:0007669"/>
    <property type="project" value="UniProtKB-UniRule"/>
</dbReference>
<dbReference type="CDD" id="cd00983">
    <property type="entry name" value="RecA"/>
    <property type="match status" value="1"/>
</dbReference>
<dbReference type="FunFam" id="3.40.50.300:FF:000087">
    <property type="entry name" value="Recombinase RecA"/>
    <property type="match status" value="1"/>
</dbReference>
<dbReference type="Gene3D" id="3.40.50.300">
    <property type="entry name" value="P-loop containing nucleotide triphosphate hydrolases"/>
    <property type="match status" value="1"/>
</dbReference>
<dbReference type="HAMAP" id="MF_00268">
    <property type="entry name" value="RecA"/>
    <property type="match status" value="1"/>
</dbReference>
<dbReference type="InterPro" id="IPR003593">
    <property type="entry name" value="AAA+_ATPase"/>
</dbReference>
<dbReference type="InterPro" id="IPR013765">
    <property type="entry name" value="DNA_recomb/repair_RecA"/>
</dbReference>
<dbReference type="InterPro" id="IPR020584">
    <property type="entry name" value="DNA_recomb/repair_RecA_CS"/>
</dbReference>
<dbReference type="InterPro" id="IPR027417">
    <property type="entry name" value="P-loop_NTPase"/>
</dbReference>
<dbReference type="InterPro" id="IPR049261">
    <property type="entry name" value="RecA-like_C"/>
</dbReference>
<dbReference type="InterPro" id="IPR049428">
    <property type="entry name" value="RecA-like_N"/>
</dbReference>
<dbReference type="InterPro" id="IPR020588">
    <property type="entry name" value="RecA_ATP-bd"/>
</dbReference>
<dbReference type="InterPro" id="IPR023400">
    <property type="entry name" value="RecA_C_sf"/>
</dbReference>
<dbReference type="InterPro" id="IPR020587">
    <property type="entry name" value="RecA_monomer-monomer_interface"/>
</dbReference>
<dbReference type="NCBIfam" id="TIGR02012">
    <property type="entry name" value="tigrfam_recA"/>
    <property type="match status" value="1"/>
</dbReference>
<dbReference type="PANTHER" id="PTHR45900:SF1">
    <property type="entry name" value="MITOCHONDRIAL DNA REPAIR PROTEIN RECA HOMOLOG-RELATED"/>
    <property type="match status" value="1"/>
</dbReference>
<dbReference type="PANTHER" id="PTHR45900">
    <property type="entry name" value="RECA"/>
    <property type="match status" value="1"/>
</dbReference>
<dbReference type="Pfam" id="PF00154">
    <property type="entry name" value="RecA"/>
    <property type="match status" value="1"/>
</dbReference>
<dbReference type="Pfam" id="PF21096">
    <property type="entry name" value="RecA_C"/>
    <property type="match status" value="1"/>
</dbReference>
<dbReference type="PRINTS" id="PR00142">
    <property type="entry name" value="RECA"/>
</dbReference>
<dbReference type="SMART" id="SM00382">
    <property type="entry name" value="AAA"/>
    <property type="match status" value="1"/>
</dbReference>
<dbReference type="SUPFAM" id="SSF52540">
    <property type="entry name" value="P-loop containing nucleoside triphosphate hydrolases"/>
    <property type="match status" value="1"/>
</dbReference>
<dbReference type="SUPFAM" id="SSF54752">
    <property type="entry name" value="RecA protein, C-terminal domain"/>
    <property type="match status" value="1"/>
</dbReference>
<dbReference type="PROSITE" id="PS00321">
    <property type="entry name" value="RECA_1"/>
    <property type="match status" value="1"/>
</dbReference>
<dbReference type="PROSITE" id="PS50162">
    <property type="entry name" value="RECA_2"/>
    <property type="match status" value="1"/>
</dbReference>
<dbReference type="PROSITE" id="PS50163">
    <property type="entry name" value="RECA_3"/>
    <property type="match status" value="1"/>
</dbReference>
<sequence>MKTDPNKEKALNAVLSQIEKQFGKGSIMKLGEDRSMDVETISTGSLSLDVALGAGGLPMGRIVEIYGPESSGKTTLTLEVIAAAQKQGKTCAFIDAEHALDPIYAKKLGVDIDNLLCSQPDTGEQALEICDALTRSGAVDVIVVDSVAALTPKAEIEGEIGDSHMGLAARMMSQAMRKLAGNLKQSNTLLIFINQIRMKIGVMFGNPETTTGGNALKFYASVRLDIRRTGAIKDREEVIGNETRVKVVKNKIAAPFKQAEFQILYGQGINSTGELVDLGVQHKLIEKSGAWYAYKGNKIGQGRANAGKYLIENPEVSDEIETTLRAMLLGNGEKIAPDAADTAGDNVDLETGEVF</sequence>